<geneLocation type="plasmid">
    <name>p42e</name>
</geneLocation>
<keyword id="KW-0119">Carbohydrate metabolism</keyword>
<keyword id="KW-0963">Cytoplasm</keyword>
<keyword id="KW-0413">Isomerase</keyword>
<keyword id="KW-0614">Plasmid</keyword>
<keyword id="KW-1185">Reference proteome</keyword>
<keyword id="KW-0684">Rhamnose metabolism</keyword>
<name>RHAM_RHIEC</name>
<comment type="function">
    <text evidence="1">Involved in the anomeric conversion of L-rhamnose.</text>
</comment>
<comment type="catalytic activity">
    <reaction evidence="1">
        <text>alpha-L-rhamnose = beta-L-rhamnose</text>
        <dbReference type="Rhea" id="RHEA:25584"/>
        <dbReference type="ChEBI" id="CHEBI:27586"/>
        <dbReference type="ChEBI" id="CHEBI:27907"/>
        <dbReference type="EC" id="5.1.3.32"/>
    </reaction>
</comment>
<comment type="pathway">
    <text evidence="1">Carbohydrate metabolism; L-rhamnose metabolism.</text>
</comment>
<comment type="subunit">
    <text evidence="1">Homodimer.</text>
</comment>
<comment type="subcellular location">
    <subcellularLocation>
        <location evidence="1">Cytoplasm</location>
    </subcellularLocation>
</comment>
<comment type="similarity">
    <text evidence="1">Belongs to the rhamnose mutarotase family.</text>
</comment>
<gene>
    <name evidence="1" type="primary">rhaM</name>
    <name type="ordered locus">RHE_PE00285</name>
</gene>
<feature type="chain" id="PRO_0000344592" description="L-rhamnose mutarotase">
    <location>
        <begin position="1"/>
        <end position="106"/>
    </location>
</feature>
<feature type="active site" description="Proton donor" evidence="1">
    <location>
        <position position="24"/>
    </location>
</feature>
<feature type="binding site" evidence="1">
    <location>
        <position position="20"/>
    </location>
    <ligand>
        <name>substrate</name>
    </ligand>
</feature>
<feature type="binding site" evidence="1">
    <location>
        <position position="43"/>
    </location>
    <ligand>
        <name>substrate</name>
    </ligand>
</feature>
<feature type="binding site" evidence="1">
    <location>
        <begin position="78"/>
        <end position="79"/>
    </location>
    <ligand>
        <name>substrate</name>
    </ligand>
</feature>
<dbReference type="EC" id="5.1.3.32" evidence="1"/>
<dbReference type="EMBL" id="CP000137">
    <property type="protein sequence ID" value="ABC93720.1"/>
    <property type="molecule type" value="Genomic_DNA"/>
</dbReference>
<dbReference type="RefSeq" id="WP_011428139.1">
    <property type="nucleotide sequence ID" value="NC_007765.1"/>
</dbReference>
<dbReference type="SMR" id="Q2K0S6"/>
<dbReference type="KEGG" id="ret:RHE_PE00285"/>
<dbReference type="HOGENOM" id="CLU_100689_2_0_5"/>
<dbReference type="OrthoDB" id="9799608at2"/>
<dbReference type="UniPathway" id="UPA00125"/>
<dbReference type="Proteomes" id="UP000001936">
    <property type="component" value="Plasmid p42e"/>
</dbReference>
<dbReference type="GO" id="GO:0005737">
    <property type="term" value="C:cytoplasm"/>
    <property type="evidence" value="ECO:0007669"/>
    <property type="project" value="UniProtKB-SubCell"/>
</dbReference>
<dbReference type="GO" id="GO:0062192">
    <property type="term" value="F:L-rhamnose mutarotase activity"/>
    <property type="evidence" value="ECO:0007669"/>
    <property type="project" value="UniProtKB-EC"/>
</dbReference>
<dbReference type="GO" id="GO:0019301">
    <property type="term" value="P:rhamnose catabolic process"/>
    <property type="evidence" value="ECO:0007669"/>
    <property type="project" value="TreeGrafter"/>
</dbReference>
<dbReference type="Gene3D" id="3.30.70.100">
    <property type="match status" value="1"/>
</dbReference>
<dbReference type="HAMAP" id="MF_01663">
    <property type="entry name" value="L_rham_rotase"/>
    <property type="match status" value="1"/>
</dbReference>
<dbReference type="InterPro" id="IPR011008">
    <property type="entry name" value="Dimeric_a/b-barrel"/>
</dbReference>
<dbReference type="InterPro" id="IPR013448">
    <property type="entry name" value="L-rhamnose_mutarotase"/>
</dbReference>
<dbReference type="InterPro" id="IPR008000">
    <property type="entry name" value="Rham/fucose_mutarotase"/>
</dbReference>
<dbReference type="NCBIfam" id="TIGR02625">
    <property type="entry name" value="YiiL_rotase"/>
    <property type="match status" value="1"/>
</dbReference>
<dbReference type="PANTHER" id="PTHR34389">
    <property type="entry name" value="L-RHAMNOSE MUTAROTASE"/>
    <property type="match status" value="1"/>
</dbReference>
<dbReference type="PANTHER" id="PTHR34389:SF2">
    <property type="entry name" value="L-RHAMNOSE MUTAROTASE"/>
    <property type="match status" value="1"/>
</dbReference>
<dbReference type="Pfam" id="PF05336">
    <property type="entry name" value="rhaM"/>
    <property type="match status" value="1"/>
</dbReference>
<dbReference type="SUPFAM" id="SSF54909">
    <property type="entry name" value="Dimeric alpha+beta barrel"/>
    <property type="match status" value="1"/>
</dbReference>
<evidence type="ECO:0000255" key="1">
    <source>
        <dbReference type="HAMAP-Rule" id="MF_01663"/>
    </source>
</evidence>
<proteinExistence type="inferred from homology"/>
<protein>
    <recommendedName>
        <fullName evidence="1">L-rhamnose mutarotase</fullName>
        <ecNumber evidence="1">5.1.3.32</ecNumber>
    </recommendedName>
    <alternativeName>
        <fullName evidence="1">Rhamnose 1-epimerase</fullName>
    </alternativeName>
    <alternativeName>
        <fullName evidence="1">Type-3 mutarotase</fullName>
    </alternativeName>
</protein>
<sequence length="106" mass="12280">MTSEKHAFKMQLNPGMEAEYRKRHDEIWPELVDLLHKSGASDYSIHLDRETNTLFGVLTRPKDHTMASLPEHPVMKKWWAHMADIMATNPDNSPVQSDLVTLFHMP</sequence>
<organism>
    <name type="scientific">Rhizobium etli (strain ATCC 51251 / DSM 11541 / JCM 21823 / NBRC 15573 / CFN 42)</name>
    <dbReference type="NCBI Taxonomy" id="347834"/>
    <lineage>
        <taxon>Bacteria</taxon>
        <taxon>Pseudomonadati</taxon>
        <taxon>Pseudomonadota</taxon>
        <taxon>Alphaproteobacteria</taxon>
        <taxon>Hyphomicrobiales</taxon>
        <taxon>Rhizobiaceae</taxon>
        <taxon>Rhizobium/Agrobacterium group</taxon>
        <taxon>Rhizobium</taxon>
    </lineage>
</organism>
<reference key="1">
    <citation type="journal article" date="2006" name="Proc. Natl. Acad. Sci. U.S.A.">
        <title>The partitioned Rhizobium etli genome: genetic and metabolic redundancy in seven interacting replicons.</title>
        <authorList>
            <person name="Gonzalez V."/>
            <person name="Santamaria R.I."/>
            <person name="Bustos P."/>
            <person name="Hernandez-Gonzalez I."/>
            <person name="Medrano-Soto A."/>
            <person name="Moreno-Hagelsieb G."/>
            <person name="Janga S.C."/>
            <person name="Ramirez M.A."/>
            <person name="Jimenez-Jacinto V."/>
            <person name="Collado-Vides J."/>
            <person name="Davila G."/>
        </authorList>
    </citation>
    <scope>NUCLEOTIDE SEQUENCE [LARGE SCALE GENOMIC DNA]</scope>
    <source>
        <strain>ATCC 51251 / DSM 11541 / JCM 21823 / NBRC 15573 / CFN 42</strain>
    </source>
</reference>
<accession>Q2K0S6</accession>